<name>CMOA_KLEP3</name>
<organism>
    <name type="scientific">Klebsiella pneumoniae (strain 342)</name>
    <dbReference type="NCBI Taxonomy" id="507522"/>
    <lineage>
        <taxon>Bacteria</taxon>
        <taxon>Pseudomonadati</taxon>
        <taxon>Pseudomonadota</taxon>
        <taxon>Gammaproteobacteria</taxon>
        <taxon>Enterobacterales</taxon>
        <taxon>Enterobacteriaceae</taxon>
        <taxon>Klebsiella/Raoultella group</taxon>
        <taxon>Klebsiella</taxon>
        <taxon>Klebsiella pneumoniae complex</taxon>
    </lineage>
</organism>
<reference key="1">
    <citation type="journal article" date="2008" name="PLoS Genet.">
        <title>Complete genome sequence of the N2-fixing broad host range endophyte Klebsiella pneumoniae 342 and virulence predictions verified in mice.</title>
        <authorList>
            <person name="Fouts D.E."/>
            <person name="Tyler H.L."/>
            <person name="DeBoy R.T."/>
            <person name="Daugherty S."/>
            <person name="Ren Q."/>
            <person name="Badger J.H."/>
            <person name="Durkin A.S."/>
            <person name="Huot H."/>
            <person name="Shrivastava S."/>
            <person name="Kothari S."/>
            <person name="Dodson R.J."/>
            <person name="Mohamoud Y."/>
            <person name="Khouri H."/>
            <person name="Roesch L.F.W."/>
            <person name="Krogfelt K.A."/>
            <person name="Struve C."/>
            <person name="Triplett E.W."/>
            <person name="Methe B.A."/>
        </authorList>
    </citation>
    <scope>NUCLEOTIDE SEQUENCE [LARGE SCALE GENOMIC DNA]</scope>
    <source>
        <strain>342</strain>
    </source>
</reference>
<sequence length="247" mass="27617">MSHRDTLFSAPIASLGDWTFDERVAEVFPDMIQRSVPGYSNIISMIGMLAERFVQPNTQVYDLGCSLGAATLSVRRNISHPGCRIIAIDNSPAMVERCRRHIDAYKAPTPVEVIEGDIRDVAIENASLVILNFTIQFLEPGDRQAILNKVYQGLNPGGALVLSEKFSFEDAHVGELLFNMHHDFKRANGYSELEISQKRSMLENVMLTDSVETHKARLRQAGFEHAELWFQCFNFGSLVAVKSGEQA</sequence>
<keyword id="KW-0949">S-adenosyl-L-methionine</keyword>
<keyword id="KW-0808">Transferase</keyword>
<feature type="chain" id="PRO_1000201358" description="Carboxy-S-adenosyl-L-methionine synthase">
    <location>
        <begin position="1"/>
        <end position="247"/>
    </location>
</feature>
<feature type="binding site" evidence="1">
    <location>
        <position position="39"/>
    </location>
    <ligand>
        <name>S-adenosyl-L-methionine</name>
        <dbReference type="ChEBI" id="CHEBI:59789"/>
    </ligand>
</feature>
<feature type="binding site" evidence="1">
    <location>
        <begin position="64"/>
        <end position="66"/>
    </location>
    <ligand>
        <name>S-adenosyl-L-methionine</name>
        <dbReference type="ChEBI" id="CHEBI:59789"/>
    </ligand>
</feature>
<feature type="binding site" evidence="1">
    <location>
        <begin position="89"/>
        <end position="90"/>
    </location>
    <ligand>
        <name>S-adenosyl-L-methionine</name>
        <dbReference type="ChEBI" id="CHEBI:59789"/>
    </ligand>
</feature>
<feature type="binding site" evidence="1">
    <location>
        <begin position="117"/>
        <end position="118"/>
    </location>
    <ligand>
        <name>S-adenosyl-L-methionine</name>
        <dbReference type="ChEBI" id="CHEBI:59789"/>
    </ligand>
</feature>
<feature type="binding site" evidence="1">
    <location>
        <position position="132"/>
    </location>
    <ligand>
        <name>S-adenosyl-L-methionine</name>
        <dbReference type="ChEBI" id="CHEBI:59789"/>
    </ligand>
</feature>
<feature type="binding site" evidence="1">
    <location>
        <position position="199"/>
    </location>
    <ligand>
        <name>S-adenosyl-L-methionine</name>
        <dbReference type="ChEBI" id="CHEBI:59789"/>
    </ligand>
</feature>
<accession>B5XPZ6</accession>
<gene>
    <name evidence="1" type="primary">cmoA</name>
    <name type="ordered locus">KPK_1900</name>
</gene>
<evidence type="ECO:0000255" key="1">
    <source>
        <dbReference type="HAMAP-Rule" id="MF_01589"/>
    </source>
</evidence>
<dbReference type="EC" id="2.1.3.-" evidence="1"/>
<dbReference type="EMBL" id="CP000964">
    <property type="protein sequence ID" value="ACI09543.1"/>
    <property type="molecule type" value="Genomic_DNA"/>
</dbReference>
<dbReference type="SMR" id="B5XPZ6"/>
<dbReference type="KEGG" id="kpe:KPK_1900"/>
<dbReference type="HOGENOM" id="CLU_078475_0_0_6"/>
<dbReference type="Proteomes" id="UP000001734">
    <property type="component" value="Chromosome"/>
</dbReference>
<dbReference type="GO" id="GO:0016743">
    <property type="term" value="F:carboxyl- or carbamoyltransferase activity"/>
    <property type="evidence" value="ECO:0007669"/>
    <property type="project" value="UniProtKB-UniRule"/>
</dbReference>
<dbReference type="GO" id="GO:1904047">
    <property type="term" value="F:S-adenosyl-L-methionine binding"/>
    <property type="evidence" value="ECO:0007669"/>
    <property type="project" value="UniProtKB-UniRule"/>
</dbReference>
<dbReference type="GO" id="GO:0002098">
    <property type="term" value="P:tRNA wobble uridine modification"/>
    <property type="evidence" value="ECO:0007669"/>
    <property type="project" value="InterPro"/>
</dbReference>
<dbReference type="CDD" id="cd02440">
    <property type="entry name" value="AdoMet_MTases"/>
    <property type="match status" value="1"/>
</dbReference>
<dbReference type="FunFam" id="3.40.50.150:FF:000030">
    <property type="entry name" value="Carboxy-S-adenosyl-L-methionine synthase"/>
    <property type="match status" value="1"/>
</dbReference>
<dbReference type="Gene3D" id="3.40.50.150">
    <property type="entry name" value="Vaccinia Virus protein VP39"/>
    <property type="match status" value="1"/>
</dbReference>
<dbReference type="HAMAP" id="MF_01589">
    <property type="entry name" value="Cx_SAM_synthase"/>
    <property type="match status" value="1"/>
</dbReference>
<dbReference type="InterPro" id="IPR005271">
    <property type="entry name" value="CmoA"/>
</dbReference>
<dbReference type="InterPro" id="IPR041698">
    <property type="entry name" value="Methyltransf_25"/>
</dbReference>
<dbReference type="InterPro" id="IPR029063">
    <property type="entry name" value="SAM-dependent_MTases_sf"/>
</dbReference>
<dbReference type="NCBIfam" id="TIGR00740">
    <property type="entry name" value="carboxy-S-adenosyl-L-methionine synthase CmoA"/>
    <property type="match status" value="1"/>
</dbReference>
<dbReference type="NCBIfam" id="NF011995">
    <property type="entry name" value="PRK15451.1"/>
    <property type="match status" value="1"/>
</dbReference>
<dbReference type="PANTHER" id="PTHR43861:SF2">
    <property type="entry name" value="CARBOXY-S-ADENOSYL-L-METHIONINE SYNTHASE"/>
    <property type="match status" value="1"/>
</dbReference>
<dbReference type="PANTHER" id="PTHR43861">
    <property type="entry name" value="TRANS-ACONITATE 2-METHYLTRANSFERASE-RELATED"/>
    <property type="match status" value="1"/>
</dbReference>
<dbReference type="Pfam" id="PF13649">
    <property type="entry name" value="Methyltransf_25"/>
    <property type="match status" value="1"/>
</dbReference>
<dbReference type="PIRSF" id="PIRSF006325">
    <property type="entry name" value="MeTrfase_bac"/>
    <property type="match status" value="1"/>
</dbReference>
<dbReference type="SUPFAM" id="SSF53335">
    <property type="entry name" value="S-adenosyl-L-methionine-dependent methyltransferases"/>
    <property type="match status" value="1"/>
</dbReference>
<comment type="function">
    <text evidence="1">Catalyzes the conversion of S-adenosyl-L-methionine (SAM) to carboxy-S-adenosyl-L-methionine (Cx-SAM).</text>
</comment>
<comment type="catalytic activity">
    <reaction evidence="1">
        <text>prephenate + S-adenosyl-L-methionine = carboxy-S-adenosyl-L-methionine + 3-phenylpyruvate + H2O</text>
        <dbReference type="Rhea" id="RHEA:51692"/>
        <dbReference type="ChEBI" id="CHEBI:15377"/>
        <dbReference type="ChEBI" id="CHEBI:18005"/>
        <dbReference type="ChEBI" id="CHEBI:29934"/>
        <dbReference type="ChEBI" id="CHEBI:59789"/>
        <dbReference type="ChEBI" id="CHEBI:134278"/>
    </reaction>
</comment>
<comment type="subunit">
    <text evidence="1">Homodimer.</text>
</comment>
<comment type="similarity">
    <text evidence="1">Belongs to the class I-like SAM-binding methyltransferase superfamily. Cx-SAM synthase family.</text>
</comment>
<proteinExistence type="inferred from homology"/>
<protein>
    <recommendedName>
        <fullName evidence="1">Carboxy-S-adenosyl-L-methionine synthase</fullName>
        <shortName evidence="1">Cx-SAM synthase</shortName>
        <ecNumber evidence="1">2.1.3.-</ecNumber>
    </recommendedName>
</protein>